<proteinExistence type="evidence at transcript level"/>
<reference key="1">
    <citation type="submission" date="2004-11" db="EMBL/GenBank/DDBJ databases">
        <authorList>
            <consortium name="The German cDNA consortium"/>
        </authorList>
    </citation>
    <scope>NUCLEOTIDE SEQUENCE [LARGE SCALE MRNA]</scope>
    <source>
        <tissue>Kidney</tissue>
    </source>
</reference>
<name>RAEL1_PONAB</name>
<evidence type="ECO:0000250" key="1">
    <source>
        <dbReference type="UniProtKB" id="P78406"/>
    </source>
</evidence>
<evidence type="ECO:0000256" key="2">
    <source>
        <dbReference type="SAM" id="MobiDB-lite"/>
    </source>
</evidence>
<evidence type="ECO:0000305" key="3"/>
<comment type="function">
    <text evidence="1">Plays a role in mitotic bipolar spindle formation. Binds mRNA. May function in nucleocytoplasmic transport and in directly or indirectly attaching cytoplasmic mRNPs to the cytoskeleton.</text>
</comment>
<comment type="subunit">
    <text evidence="1">Interacts with NUMA1 (via N-terminal end of the coiled-coil domain); this interaction promotes spindle formation in mitosis (By similarity). Interacts with NUP98 (By similarity). Interacts with MYCBP2 (By similarity). Interacts with USP11 (By similarity).</text>
</comment>
<comment type="subcellular location">
    <subcellularLocation>
        <location evidence="1">Cytoplasm</location>
    </subcellularLocation>
    <subcellularLocation>
        <location evidence="1">Nucleus</location>
    </subcellularLocation>
    <subcellularLocation>
        <location evidence="1">Cytoplasm</location>
        <location evidence="1">Cytoskeleton</location>
        <location evidence="1">Spindle pole</location>
    </subcellularLocation>
    <text evidence="1">Recruited from interphase nuclei to spindle MTs during mitosis.</text>
</comment>
<comment type="similarity">
    <text evidence="3">Belongs to the WD repeat rae1 family.</text>
</comment>
<dbReference type="EMBL" id="CR857262">
    <property type="protein sequence ID" value="CAH89558.1"/>
    <property type="molecule type" value="mRNA"/>
</dbReference>
<dbReference type="RefSeq" id="NP_001124680.1">
    <property type="nucleotide sequence ID" value="NM_001131208.1"/>
</dbReference>
<dbReference type="RefSeq" id="XP_024094221.1">
    <property type="nucleotide sequence ID" value="XM_024238453.3"/>
</dbReference>
<dbReference type="SMR" id="Q5RF99"/>
<dbReference type="FunCoup" id="Q5RF99">
    <property type="interactions" value="4226"/>
</dbReference>
<dbReference type="STRING" id="9601.ENSPPYP00000012468"/>
<dbReference type="Ensembl" id="ENSPPYT00000012956.3">
    <property type="protein sequence ID" value="ENSPPYP00000012468.2"/>
    <property type="gene ID" value="ENSPPYG00000011159.3"/>
</dbReference>
<dbReference type="GeneID" id="100171527"/>
<dbReference type="KEGG" id="pon:100171527"/>
<dbReference type="CTD" id="8480"/>
<dbReference type="eggNOG" id="KOG0647">
    <property type="taxonomic scope" value="Eukaryota"/>
</dbReference>
<dbReference type="GeneTree" id="ENSGT00950000183091"/>
<dbReference type="HOGENOM" id="CLU_038526_1_0_1"/>
<dbReference type="InParanoid" id="Q5RF99"/>
<dbReference type="OrthoDB" id="256303at2759"/>
<dbReference type="TreeFam" id="TF105481"/>
<dbReference type="Proteomes" id="UP000001595">
    <property type="component" value="Chromosome 20"/>
</dbReference>
<dbReference type="GO" id="GO:0005737">
    <property type="term" value="C:cytoplasm"/>
    <property type="evidence" value="ECO:0007669"/>
    <property type="project" value="UniProtKB-SubCell"/>
</dbReference>
<dbReference type="GO" id="GO:0097431">
    <property type="term" value="C:mitotic spindle pole"/>
    <property type="evidence" value="ECO:0000250"/>
    <property type="project" value="UniProtKB"/>
</dbReference>
<dbReference type="GO" id="GO:0005634">
    <property type="term" value="C:nucleus"/>
    <property type="evidence" value="ECO:0007669"/>
    <property type="project" value="UniProtKB-SubCell"/>
</dbReference>
<dbReference type="GO" id="GO:0051301">
    <property type="term" value="P:cell division"/>
    <property type="evidence" value="ECO:0007669"/>
    <property type="project" value="UniProtKB-KW"/>
</dbReference>
<dbReference type="GO" id="GO:0060236">
    <property type="term" value="P:regulation of mitotic spindle organization"/>
    <property type="evidence" value="ECO:0000250"/>
    <property type="project" value="UniProtKB"/>
</dbReference>
<dbReference type="FunFam" id="2.130.10.10:FF:000084">
    <property type="entry name" value="mRNA export factor"/>
    <property type="match status" value="1"/>
</dbReference>
<dbReference type="Gene3D" id="2.130.10.10">
    <property type="entry name" value="YVTN repeat-like/Quinoprotein amine dehydrogenase"/>
    <property type="match status" value="1"/>
</dbReference>
<dbReference type="InterPro" id="IPR020472">
    <property type="entry name" value="G-protein_beta_WD-40_rep"/>
</dbReference>
<dbReference type="InterPro" id="IPR015943">
    <property type="entry name" value="WD40/YVTN_repeat-like_dom_sf"/>
</dbReference>
<dbReference type="InterPro" id="IPR019775">
    <property type="entry name" value="WD40_repeat_CS"/>
</dbReference>
<dbReference type="InterPro" id="IPR036322">
    <property type="entry name" value="WD40_repeat_dom_sf"/>
</dbReference>
<dbReference type="InterPro" id="IPR001680">
    <property type="entry name" value="WD40_rpt"/>
</dbReference>
<dbReference type="PANTHER" id="PTHR10971">
    <property type="entry name" value="MRNA EXPORT FACTOR AND BUB3"/>
    <property type="match status" value="1"/>
</dbReference>
<dbReference type="Pfam" id="PF00400">
    <property type="entry name" value="WD40"/>
    <property type="match status" value="3"/>
</dbReference>
<dbReference type="PRINTS" id="PR00320">
    <property type="entry name" value="GPROTEINBRPT"/>
</dbReference>
<dbReference type="SMART" id="SM00320">
    <property type="entry name" value="WD40"/>
    <property type="match status" value="4"/>
</dbReference>
<dbReference type="SUPFAM" id="SSF50978">
    <property type="entry name" value="WD40 repeat-like"/>
    <property type="match status" value="1"/>
</dbReference>
<dbReference type="PROSITE" id="PS00678">
    <property type="entry name" value="WD_REPEATS_1"/>
    <property type="match status" value="2"/>
</dbReference>
<dbReference type="PROSITE" id="PS50082">
    <property type="entry name" value="WD_REPEATS_2"/>
    <property type="match status" value="3"/>
</dbReference>
<dbReference type="PROSITE" id="PS50294">
    <property type="entry name" value="WD_REPEATS_REGION"/>
    <property type="match status" value="1"/>
</dbReference>
<sequence length="368" mass="40968">MSLFGTTSGFGTSGTSMFGSATTDNHNPMKDIEVTSSPDDSIGCLSFSPPTLPGNFLIAGSWANDVRCWEVQDSGQTIPKAQQMHTGPVLDVCWSDDGSKVFTASCDKTAKMWDLSSNQAIQIAQHDAPVKTIHWIKAPNYSCVMTGSWDKTLKFWDTRSSNPMMVLQLPERCYCADVIYPMAVVATAERGLIVYQLENQPSEFRRIESPLKHQHRCVAIFKDKQNKPTGFALGSIEGRVAIHYINPPNPAKDNFTFKCHRSNGTNTSAPQDIYAVNGIAFHPVHGTLATVGSDGRFSFWDKDARTKLKTSEQLDQPISACCFNHNGNIFAYASSYDWSKGHEFYNPQKKNYIFLRNAAEELKPRNKK</sequence>
<gene>
    <name type="primary">RAE1</name>
    <name type="synonym">MRNP41</name>
</gene>
<protein>
    <recommendedName>
        <fullName>mRNA export factor</fullName>
    </recommendedName>
    <alternativeName>
        <fullName>Rae1 protein homolog</fullName>
    </alternativeName>
    <alternativeName>
        <fullName>mRNA-associated protein mrnp 41</fullName>
    </alternativeName>
</protein>
<keyword id="KW-0131">Cell cycle</keyword>
<keyword id="KW-0132">Cell division</keyword>
<keyword id="KW-0963">Cytoplasm</keyword>
<keyword id="KW-0206">Cytoskeleton</keyword>
<keyword id="KW-0498">Mitosis</keyword>
<keyword id="KW-0539">Nucleus</keyword>
<keyword id="KW-0597">Phosphoprotein</keyword>
<keyword id="KW-1185">Reference proteome</keyword>
<keyword id="KW-0677">Repeat</keyword>
<keyword id="KW-0813">Transport</keyword>
<keyword id="KW-0853">WD repeat</keyword>
<organism>
    <name type="scientific">Pongo abelii</name>
    <name type="common">Sumatran orangutan</name>
    <name type="synonym">Pongo pygmaeus abelii</name>
    <dbReference type="NCBI Taxonomy" id="9601"/>
    <lineage>
        <taxon>Eukaryota</taxon>
        <taxon>Metazoa</taxon>
        <taxon>Chordata</taxon>
        <taxon>Craniata</taxon>
        <taxon>Vertebrata</taxon>
        <taxon>Euteleostomi</taxon>
        <taxon>Mammalia</taxon>
        <taxon>Eutheria</taxon>
        <taxon>Euarchontoglires</taxon>
        <taxon>Primates</taxon>
        <taxon>Haplorrhini</taxon>
        <taxon>Catarrhini</taxon>
        <taxon>Hominidae</taxon>
        <taxon>Pongo</taxon>
    </lineage>
</organism>
<accession>Q5RF99</accession>
<feature type="chain" id="PRO_0000312981" description="mRNA export factor">
    <location>
        <begin position="1"/>
        <end position="368"/>
    </location>
</feature>
<feature type="repeat" description="WD 1">
    <location>
        <begin position="37"/>
        <end position="79"/>
    </location>
</feature>
<feature type="repeat" description="WD 2">
    <location>
        <begin position="84"/>
        <end position="114"/>
    </location>
</feature>
<feature type="repeat" description="WD 3">
    <location>
        <begin position="125"/>
        <end position="157"/>
    </location>
</feature>
<feature type="repeat" description="WD 4">
    <location>
        <begin position="168"/>
        <end position="206"/>
    </location>
</feature>
<feature type="repeat" description="WD 5">
    <location>
        <begin position="215"/>
        <end position="255"/>
    </location>
</feature>
<feature type="repeat" description="WD 6">
    <location>
        <begin position="271"/>
        <end position="301"/>
    </location>
</feature>
<feature type="repeat" description="WD 7">
    <location>
        <begin position="310"/>
        <end position="346"/>
    </location>
</feature>
<feature type="region of interest" description="Disordered" evidence="2">
    <location>
        <begin position="15"/>
        <end position="34"/>
    </location>
</feature>
<feature type="modified residue" description="Phosphothreonine" evidence="1">
    <location>
        <position position="229"/>
    </location>
</feature>